<organism>
    <name type="scientific">Rhizobium meliloti (strain 1021)</name>
    <name type="common">Ensifer meliloti</name>
    <name type="synonym">Sinorhizobium meliloti</name>
    <dbReference type="NCBI Taxonomy" id="266834"/>
    <lineage>
        <taxon>Bacteria</taxon>
        <taxon>Pseudomonadati</taxon>
        <taxon>Pseudomonadota</taxon>
        <taxon>Alphaproteobacteria</taxon>
        <taxon>Hyphomicrobiales</taxon>
        <taxon>Rhizobiaceae</taxon>
        <taxon>Sinorhizobium/Ensifer group</taxon>
        <taxon>Sinorhizobium</taxon>
    </lineage>
</organism>
<dbReference type="EC" id="1.21.98.4" evidence="1"/>
<dbReference type="EMBL" id="AY013584">
    <property type="protein sequence ID" value="AAG42542.1"/>
    <property type="molecule type" value="Genomic_DNA"/>
</dbReference>
<dbReference type="EMBL" id="AL591985">
    <property type="protein sequence ID" value="CAC48601.1"/>
    <property type="molecule type" value="Genomic_DNA"/>
</dbReference>
<dbReference type="PIR" id="A95867">
    <property type="entry name" value="A95867"/>
</dbReference>
<dbReference type="RefSeq" id="NP_436741.1">
    <property type="nucleotide sequence ID" value="NC_003078.1"/>
</dbReference>
<dbReference type="RefSeq" id="WP_003528706.1">
    <property type="nucleotide sequence ID" value="NC_003078.1"/>
</dbReference>
<dbReference type="SMR" id="Q9EXU8"/>
<dbReference type="EnsemblBacteria" id="CAC48601">
    <property type="protein sequence ID" value="CAC48601"/>
    <property type="gene ID" value="SM_b20208"/>
</dbReference>
<dbReference type="KEGG" id="sme:SM_b20208"/>
<dbReference type="PATRIC" id="fig|266834.11.peg.5117"/>
<dbReference type="eggNOG" id="COG0535">
    <property type="taxonomic scope" value="Bacteria"/>
</dbReference>
<dbReference type="HOGENOM" id="CLU_009273_4_7_5"/>
<dbReference type="OrthoDB" id="9792276at2"/>
<dbReference type="UniPathway" id="UPA00539"/>
<dbReference type="Proteomes" id="UP000001976">
    <property type="component" value="Plasmid pSymB"/>
</dbReference>
<dbReference type="GO" id="GO:0051539">
    <property type="term" value="F:4 iron, 4 sulfur cluster binding"/>
    <property type="evidence" value="ECO:0007669"/>
    <property type="project" value="UniProtKB-KW"/>
</dbReference>
<dbReference type="GO" id="GO:0009975">
    <property type="term" value="F:cyclase activity"/>
    <property type="evidence" value="ECO:0007669"/>
    <property type="project" value="UniProtKB-UniRule"/>
</dbReference>
<dbReference type="GO" id="GO:0005506">
    <property type="term" value="F:iron ion binding"/>
    <property type="evidence" value="ECO:0007669"/>
    <property type="project" value="UniProtKB-UniRule"/>
</dbReference>
<dbReference type="GO" id="GO:0016491">
    <property type="term" value="F:oxidoreductase activity"/>
    <property type="evidence" value="ECO:0007669"/>
    <property type="project" value="UniProtKB-KW"/>
</dbReference>
<dbReference type="GO" id="GO:1904047">
    <property type="term" value="F:S-adenosyl-L-methionine binding"/>
    <property type="evidence" value="ECO:0007669"/>
    <property type="project" value="UniProtKB-UniRule"/>
</dbReference>
<dbReference type="GO" id="GO:0018189">
    <property type="term" value="P:pyrroloquinoline quinone biosynthetic process"/>
    <property type="evidence" value="ECO:0007669"/>
    <property type="project" value="UniProtKB-UniRule"/>
</dbReference>
<dbReference type="CDD" id="cd01335">
    <property type="entry name" value="Radical_SAM"/>
    <property type="match status" value="1"/>
</dbReference>
<dbReference type="CDD" id="cd21119">
    <property type="entry name" value="SPASM_PqqE"/>
    <property type="match status" value="1"/>
</dbReference>
<dbReference type="Gene3D" id="3.20.20.70">
    <property type="entry name" value="Aldolase class I"/>
    <property type="match status" value="1"/>
</dbReference>
<dbReference type="HAMAP" id="MF_00660">
    <property type="entry name" value="PqqE"/>
    <property type="match status" value="1"/>
</dbReference>
<dbReference type="InterPro" id="IPR023885">
    <property type="entry name" value="4Fe4S-binding_SPASM_dom"/>
</dbReference>
<dbReference type="InterPro" id="IPR013785">
    <property type="entry name" value="Aldolase_TIM"/>
</dbReference>
<dbReference type="InterPro" id="IPR006638">
    <property type="entry name" value="Elp3/MiaA/NifB-like_rSAM"/>
</dbReference>
<dbReference type="InterPro" id="IPR011843">
    <property type="entry name" value="PQQ_synth_PqqE_bac"/>
</dbReference>
<dbReference type="InterPro" id="IPR017200">
    <property type="entry name" value="PqqE-like"/>
</dbReference>
<dbReference type="InterPro" id="IPR050377">
    <property type="entry name" value="Radical_SAM_PqqE_MftC-like"/>
</dbReference>
<dbReference type="InterPro" id="IPR007197">
    <property type="entry name" value="rSAM"/>
</dbReference>
<dbReference type="NCBIfam" id="TIGR02109">
    <property type="entry name" value="PQQ_syn_pqqE"/>
    <property type="match status" value="1"/>
</dbReference>
<dbReference type="NCBIfam" id="TIGR04085">
    <property type="entry name" value="rSAM_more_4Fe4S"/>
    <property type="match status" value="1"/>
</dbReference>
<dbReference type="PANTHER" id="PTHR11228:SF7">
    <property type="entry name" value="PQQA PEPTIDE CYCLASE"/>
    <property type="match status" value="1"/>
</dbReference>
<dbReference type="PANTHER" id="PTHR11228">
    <property type="entry name" value="RADICAL SAM DOMAIN PROTEIN"/>
    <property type="match status" value="1"/>
</dbReference>
<dbReference type="Pfam" id="PF13353">
    <property type="entry name" value="Fer4_12"/>
    <property type="match status" value="1"/>
</dbReference>
<dbReference type="Pfam" id="PF04055">
    <property type="entry name" value="Radical_SAM"/>
    <property type="match status" value="1"/>
</dbReference>
<dbReference type="Pfam" id="PF13186">
    <property type="entry name" value="SPASM"/>
    <property type="match status" value="1"/>
</dbReference>
<dbReference type="PIRSF" id="PIRSF037420">
    <property type="entry name" value="PQQ_syn_pqqE"/>
    <property type="match status" value="1"/>
</dbReference>
<dbReference type="SFLD" id="SFLDF00280">
    <property type="entry name" value="coenzyme_PQQ_synthesis_protein"/>
    <property type="match status" value="1"/>
</dbReference>
<dbReference type="SFLD" id="SFLDS00029">
    <property type="entry name" value="Radical_SAM"/>
    <property type="match status" value="1"/>
</dbReference>
<dbReference type="SMART" id="SM00729">
    <property type="entry name" value="Elp3"/>
    <property type="match status" value="1"/>
</dbReference>
<dbReference type="SUPFAM" id="SSF102114">
    <property type="entry name" value="Radical SAM enzymes"/>
    <property type="match status" value="1"/>
</dbReference>
<dbReference type="PROSITE" id="PS51918">
    <property type="entry name" value="RADICAL_SAM"/>
    <property type="match status" value="1"/>
</dbReference>
<keyword id="KW-0004">4Fe-4S</keyword>
<keyword id="KW-0408">Iron</keyword>
<keyword id="KW-0411">Iron-sulfur</keyword>
<keyword id="KW-0479">Metal-binding</keyword>
<keyword id="KW-0560">Oxidoreductase</keyword>
<keyword id="KW-0614">Plasmid</keyword>
<keyword id="KW-0884">PQQ biosynthesis</keyword>
<keyword id="KW-1185">Reference proteome</keyword>
<keyword id="KW-0949">S-adenosyl-L-methionine</keyword>
<name>PQQE_RHIME</name>
<evidence type="ECO:0000255" key="1">
    <source>
        <dbReference type="HAMAP-Rule" id="MF_00660"/>
    </source>
</evidence>
<evidence type="ECO:0000255" key="2">
    <source>
        <dbReference type="PROSITE-ProRule" id="PRU01266"/>
    </source>
</evidence>
<geneLocation type="plasmid">
    <name>pSymB</name>
    <name>megaplasmid 2</name>
</geneLocation>
<protein>
    <recommendedName>
        <fullName evidence="1">PqqA peptide cyclase</fullName>
        <ecNumber evidence="1">1.21.98.4</ecNumber>
    </recommendedName>
    <alternativeName>
        <fullName evidence="1">Coenzyme PQQ synthesis protein E</fullName>
    </alternativeName>
    <alternativeName>
        <fullName evidence="1">Pyrroloquinoline quinone biosynthesis protein E</fullName>
    </alternativeName>
</protein>
<feature type="chain" id="PRO_0000219950" description="PqqA peptide cyclase">
    <location>
        <begin position="1"/>
        <end position="375"/>
    </location>
</feature>
<feature type="domain" description="Radical SAM core" evidence="2">
    <location>
        <begin position="18"/>
        <end position="235"/>
    </location>
</feature>
<feature type="binding site" evidence="1">
    <location>
        <position position="32"/>
    </location>
    <ligand>
        <name>[4Fe-4S] cluster</name>
        <dbReference type="ChEBI" id="CHEBI:49883"/>
        <note>4Fe-4S-S-AdoMet</note>
    </ligand>
</feature>
<feature type="binding site" evidence="1">
    <location>
        <position position="36"/>
    </location>
    <ligand>
        <name>[4Fe-4S] cluster</name>
        <dbReference type="ChEBI" id="CHEBI:49883"/>
        <note>4Fe-4S-S-AdoMet</note>
    </ligand>
</feature>
<feature type="binding site" evidence="1">
    <location>
        <position position="39"/>
    </location>
    <ligand>
        <name>[4Fe-4S] cluster</name>
        <dbReference type="ChEBI" id="CHEBI:49883"/>
        <note>4Fe-4S-S-AdoMet</note>
    </ligand>
</feature>
<proteinExistence type="inferred from homology"/>
<reference key="1">
    <citation type="submission" date="2000-10" db="EMBL/GenBank/DDBJ databases">
        <title>Mineral phosphate solubilization in Sinorhizobium meliloti.</title>
        <authorList>
            <person name="Finan T.M."/>
            <person name="Aneja P."/>
            <person name="Chain P."/>
            <person name="Napper K."/>
            <person name="Golding B."/>
        </authorList>
    </citation>
    <scope>NUCLEOTIDE SEQUENCE [GENOMIC DNA]</scope>
    <source>
        <strain>1021</strain>
    </source>
</reference>
<reference key="2">
    <citation type="journal article" date="2001" name="Proc. Natl. Acad. Sci. U.S.A.">
        <title>The complete sequence of the 1,683-kb pSymB megaplasmid from the N2-fixing endosymbiont Sinorhizobium meliloti.</title>
        <authorList>
            <person name="Finan T.M."/>
            <person name="Weidner S."/>
            <person name="Wong K."/>
            <person name="Buhrmester J."/>
            <person name="Chain P."/>
            <person name="Vorhoelter F.J."/>
            <person name="Hernandez-Lucas I."/>
            <person name="Becker A."/>
            <person name="Cowie A."/>
            <person name="Gouzy J."/>
            <person name="Golding B."/>
            <person name="Puehler A."/>
        </authorList>
    </citation>
    <scope>NUCLEOTIDE SEQUENCE [LARGE SCALE GENOMIC DNA]</scope>
    <source>
        <strain>1021</strain>
    </source>
</reference>
<reference key="3">
    <citation type="journal article" date="2001" name="Science">
        <title>The composite genome of the legume symbiont Sinorhizobium meliloti.</title>
        <authorList>
            <person name="Galibert F."/>
            <person name="Finan T.M."/>
            <person name="Long S.R."/>
            <person name="Puehler A."/>
            <person name="Abola P."/>
            <person name="Ampe F."/>
            <person name="Barloy-Hubler F."/>
            <person name="Barnett M.J."/>
            <person name="Becker A."/>
            <person name="Boistard P."/>
            <person name="Bothe G."/>
            <person name="Boutry M."/>
            <person name="Bowser L."/>
            <person name="Buhrmester J."/>
            <person name="Cadieu E."/>
            <person name="Capela D."/>
            <person name="Chain P."/>
            <person name="Cowie A."/>
            <person name="Davis R.W."/>
            <person name="Dreano S."/>
            <person name="Federspiel N.A."/>
            <person name="Fisher R.F."/>
            <person name="Gloux S."/>
            <person name="Godrie T."/>
            <person name="Goffeau A."/>
            <person name="Golding B."/>
            <person name="Gouzy J."/>
            <person name="Gurjal M."/>
            <person name="Hernandez-Lucas I."/>
            <person name="Hong A."/>
            <person name="Huizar L."/>
            <person name="Hyman R.W."/>
            <person name="Jones T."/>
            <person name="Kahn D."/>
            <person name="Kahn M.L."/>
            <person name="Kalman S."/>
            <person name="Keating D.H."/>
            <person name="Kiss E."/>
            <person name="Komp C."/>
            <person name="Lelaure V."/>
            <person name="Masuy D."/>
            <person name="Palm C."/>
            <person name="Peck M.C."/>
            <person name="Pohl T.M."/>
            <person name="Portetelle D."/>
            <person name="Purnelle B."/>
            <person name="Ramsperger U."/>
            <person name="Surzycki R."/>
            <person name="Thebault P."/>
            <person name="Vandenbol M."/>
            <person name="Vorhoelter F.J."/>
            <person name="Weidner S."/>
            <person name="Wells D.H."/>
            <person name="Wong K."/>
            <person name="Yeh K.-C."/>
            <person name="Batut J."/>
        </authorList>
    </citation>
    <scope>NUCLEOTIDE SEQUENCE [LARGE SCALE GENOMIC DNA]</scope>
    <source>
        <strain>1021</strain>
    </source>
</reference>
<sequence>MSDTIARPAETARTLPRILPPMAMLAELTHRCPLACPYCSNPIALTQAKEELSTEEWTGVFAQAADLGVLHLHLSGGEPAARRDLVELTQAASSLGLYTNLITSGVGLTEARMNSLADAGLDHIQLSIQGVSPESADRIGGYKGGYERKMAVAGWAADAAIPLTLNAVCHRQNMGEIDEMIELAIRLKARRIEVATVQFHGWAERNKEVLMPTREQVECATRTVAEAREKYQGILVIDYVPADYYSKYPKACMGGWGRVGLNVTPSGRVLPCHAAETIPSLSFENVRENSLSSIWYESNAFNAYRGEDWMPELCRSCERKKVDFGGCRCQAMALAGDASATDPVCIRSPLRDRLTLEVEQLSAPSVVPMNYRGRA</sequence>
<accession>Q9EXU8</accession>
<comment type="function">
    <text evidence="1">Catalyzes the cross-linking of a glutamate residue and a tyrosine residue in the PqqA protein as part of the biosynthesis of pyrroloquinoline quinone (PQQ).</text>
</comment>
<comment type="catalytic activity">
    <reaction evidence="1">
        <text>[PQQ precursor protein] + S-adenosyl-L-methionine = E-Y cross-linked-[PQQ precursor protein] + 5'-deoxyadenosine + L-methionine + H(+)</text>
        <dbReference type="Rhea" id="RHEA:56836"/>
        <dbReference type="Rhea" id="RHEA-COMP:14800"/>
        <dbReference type="Rhea" id="RHEA-COMP:14801"/>
        <dbReference type="ChEBI" id="CHEBI:15378"/>
        <dbReference type="ChEBI" id="CHEBI:17319"/>
        <dbReference type="ChEBI" id="CHEBI:57844"/>
        <dbReference type="ChEBI" id="CHEBI:59789"/>
        <dbReference type="ChEBI" id="CHEBI:141026"/>
        <dbReference type="ChEBI" id="CHEBI:141027"/>
        <dbReference type="EC" id="1.21.98.4"/>
    </reaction>
</comment>
<comment type="cofactor">
    <cofactor evidence="1">
        <name>[4Fe-4S] cluster</name>
        <dbReference type="ChEBI" id="CHEBI:49883"/>
    </cofactor>
    <text evidence="1">Binds 1 [4Fe-4S] cluster. The cluster is coordinated with 3 cysteines and an exchangeable S-adenosyl-L-methionine.</text>
</comment>
<comment type="pathway">
    <text evidence="1">Cofactor biosynthesis; pyrroloquinoline quinone biosynthesis.</text>
</comment>
<comment type="subunit">
    <text evidence="1">Interacts with PqqD. The interaction is necessary for activity of PqqE.</text>
</comment>
<comment type="similarity">
    <text evidence="1">Belongs to the radical SAM superfamily. PqqE family.</text>
</comment>
<gene>
    <name evidence="1" type="primary">pqqE</name>
    <name type="ordered locus">RB0201</name>
    <name type="ORF">SMb20208</name>
</gene>